<accession>A2CBX2</accession>
<name>PANCY_PROM3</name>
<protein>
    <recommendedName>
        <fullName evidence="1">Bifunctional pantoate ligase/cytidylate kinase</fullName>
    </recommendedName>
    <domain>
        <recommendedName>
            <fullName evidence="1">Pantothenate synthetase</fullName>
            <shortName evidence="1">PS</shortName>
            <ecNumber evidence="1">6.3.2.1</ecNumber>
        </recommendedName>
        <alternativeName>
            <fullName evidence="1">Pantoate--beta-alanine ligase</fullName>
        </alternativeName>
        <alternativeName>
            <fullName evidence="1">Pantoate-activating enzyme</fullName>
        </alternativeName>
    </domain>
    <domain>
        <recommendedName>
            <fullName evidence="1">Cytidylate kinase</fullName>
            <shortName evidence="1">CK</shortName>
            <ecNumber evidence="1">2.7.4.25</ecNumber>
        </recommendedName>
        <alternativeName>
            <fullName evidence="1">Cytidine monophosphate kinase</fullName>
            <shortName evidence="1">CMP kinase</shortName>
        </alternativeName>
    </domain>
</protein>
<proteinExistence type="inferred from homology"/>
<organism>
    <name type="scientific">Prochlorococcus marinus (strain MIT 9303)</name>
    <dbReference type="NCBI Taxonomy" id="59922"/>
    <lineage>
        <taxon>Bacteria</taxon>
        <taxon>Bacillati</taxon>
        <taxon>Cyanobacteriota</taxon>
        <taxon>Cyanophyceae</taxon>
        <taxon>Synechococcales</taxon>
        <taxon>Prochlorococcaceae</taxon>
        <taxon>Prochlorococcus</taxon>
    </lineage>
</organism>
<dbReference type="EC" id="6.3.2.1" evidence="1"/>
<dbReference type="EC" id="2.7.4.25" evidence="1"/>
<dbReference type="EMBL" id="CP000554">
    <property type="protein sequence ID" value="ABM78982.1"/>
    <property type="molecule type" value="Genomic_DNA"/>
</dbReference>
<dbReference type="SMR" id="A2CBX2"/>
<dbReference type="STRING" id="59922.P9303_22471"/>
<dbReference type="KEGG" id="pmf:P9303_22471"/>
<dbReference type="HOGENOM" id="CLU_037427_0_0_3"/>
<dbReference type="UniPathway" id="UPA00028">
    <property type="reaction ID" value="UER00005"/>
</dbReference>
<dbReference type="Proteomes" id="UP000002274">
    <property type="component" value="Chromosome"/>
</dbReference>
<dbReference type="GO" id="GO:0005829">
    <property type="term" value="C:cytosol"/>
    <property type="evidence" value="ECO:0007669"/>
    <property type="project" value="TreeGrafter"/>
</dbReference>
<dbReference type="GO" id="GO:0005524">
    <property type="term" value="F:ATP binding"/>
    <property type="evidence" value="ECO:0007669"/>
    <property type="project" value="UniProtKB-UniRule"/>
</dbReference>
<dbReference type="GO" id="GO:0036430">
    <property type="term" value="F:CMP kinase activity"/>
    <property type="evidence" value="ECO:0007669"/>
    <property type="project" value="RHEA"/>
</dbReference>
<dbReference type="GO" id="GO:0036431">
    <property type="term" value="F:dCMP kinase activity"/>
    <property type="evidence" value="ECO:0007669"/>
    <property type="project" value="RHEA"/>
</dbReference>
<dbReference type="GO" id="GO:0004592">
    <property type="term" value="F:pantoate-beta-alanine ligase activity"/>
    <property type="evidence" value="ECO:0007669"/>
    <property type="project" value="UniProtKB-UniRule"/>
</dbReference>
<dbReference type="GO" id="GO:0015949">
    <property type="term" value="P:nucleobase-containing small molecule interconversion"/>
    <property type="evidence" value="ECO:0007669"/>
    <property type="project" value="TreeGrafter"/>
</dbReference>
<dbReference type="GO" id="GO:0015940">
    <property type="term" value="P:pantothenate biosynthetic process"/>
    <property type="evidence" value="ECO:0007669"/>
    <property type="project" value="UniProtKB-UniRule"/>
</dbReference>
<dbReference type="GO" id="GO:0006220">
    <property type="term" value="P:pyrimidine nucleotide metabolic process"/>
    <property type="evidence" value="ECO:0007669"/>
    <property type="project" value="UniProtKB-UniRule"/>
</dbReference>
<dbReference type="CDD" id="cd02020">
    <property type="entry name" value="CMPK"/>
    <property type="match status" value="1"/>
</dbReference>
<dbReference type="Gene3D" id="3.40.50.620">
    <property type="entry name" value="HUPs"/>
    <property type="match status" value="1"/>
</dbReference>
<dbReference type="Gene3D" id="3.40.50.300">
    <property type="entry name" value="P-loop containing nucleotide triphosphate hydrolases"/>
    <property type="match status" value="1"/>
</dbReference>
<dbReference type="Gene3D" id="3.30.1300.10">
    <property type="entry name" value="Pantoate-beta-alanine ligase, C-terminal domain"/>
    <property type="match status" value="1"/>
</dbReference>
<dbReference type="HAMAP" id="MF_00238">
    <property type="entry name" value="Cytidyl_kinase_type1"/>
    <property type="match status" value="1"/>
</dbReference>
<dbReference type="HAMAP" id="MF_00158">
    <property type="entry name" value="PanC"/>
    <property type="match status" value="1"/>
</dbReference>
<dbReference type="HAMAP" id="MF_01349">
    <property type="entry name" value="PanCY"/>
    <property type="match status" value="1"/>
</dbReference>
<dbReference type="InterPro" id="IPR003136">
    <property type="entry name" value="Cytidylate_kin"/>
</dbReference>
<dbReference type="InterPro" id="IPR011994">
    <property type="entry name" value="Cytidylate_kinase_dom"/>
</dbReference>
<dbReference type="InterPro" id="IPR027417">
    <property type="entry name" value="P-loop_NTPase"/>
</dbReference>
<dbReference type="InterPro" id="IPR003721">
    <property type="entry name" value="Pantoate_ligase"/>
</dbReference>
<dbReference type="InterPro" id="IPR024894">
    <property type="entry name" value="Pantoate_ligase/cytidylate_kin"/>
</dbReference>
<dbReference type="InterPro" id="IPR042176">
    <property type="entry name" value="Pantoate_ligase_C"/>
</dbReference>
<dbReference type="InterPro" id="IPR014729">
    <property type="entry name" value="Rossmann-like_a/b/a_fold"/>
</dbReference>
<dbReference type="NCBIfam" id="TIGR00017">
    <property type="entry name" value="cmk"/>
    <property type="match status" value="1"/>
</dbReference>
<dbReference type="NCBIfam" id="TIGR00018">
    <property type="entry name" value="panC"/>
    <property type="match status" value="1"/>
</dbReference>
<dbReference type="NCBIfam" id="NF010004">
    <property type="entry name" value="PRK13477.1"/>
    <property type="match status" value="1"/>
</dbReference>
<dbReference type="PANTHER" id="PTHR21299:SF2">
    <property type="entry name" value="CYTIDYLATE KINASE"/>
    <property type="match status" value="1"/>
</dbReference>
<dbReference type="PANTHER" id="PTHR21299">
    <property type="entry name" value="CYTIDYLATE KINASE/PANTOATE-BETA-ALANINE LIGASE"/>
    <property type="match status" value="1"/>
</dbReference>
<dbReference type="Pfam" id="PF02224">
    <property type="entry name" value="Cytidylate_kin"/>
    <property type="match status" value="1"/>
</dbReference>
<dbReference type="Pfam" id="PF02569">
    <property type="entry name" value="Pantoate_ligase"/>
    <property type="match status" value="1"/>
</dbReference>
<dbReference type="SUPFAM" id="SSF52374">
    <property type="entry name" value="Nucleotidylyl transferase"/>
    <property type="match status" value="1"/>
</dbReference>
<dbReference type="SUPFAM" id="SSF52540">
    <property type="entry name" value="P-loop containing nucleoside triphosphate hydrolases"/>
    <property type="match status" value="1"/>
</dbReference>
<sequence length="488" mass="53156">MGALHRAHGQLIKSVQGFGSLQPAAVLVSVFVNPLQFGPAEDFDSYPRDLEADCELASRSGASALWAPSVDQVFPGGASSQFRIQVPSHLQAHLCGAIRPGHFDGVVTVVARLLALVRPEVLVLGEKDWQQLVILRHLVAQLGLPVRVHGVATVRDDDGLACSSRNRYLMTQQRQQALALPQLLARAARESQDGRAVDLAGLRCAWEQLGLEVEYVETVDAFNLQPLHAGRKLCLLAAAVRCGETRLIDHTFLMSRQPIVAIDGPAGAGKSTVTRAFAERLGLLYLDTGAMYRAVTWLTQQHDVDPHDPVAVKTILENLELELEPSQSGPQKVRINGHDVTEAIRSPEVTSSVSVVAAHGCVRKALTAQQQRMGVRGGLVAEGRDIGTAVFPDAELKVFLTASPAERARRRALDLDNRGFPVPDLAELETQIEERDRMDSTREVAPLRQAEDATELISDGMSIEEVIETLIDLFRVQVPEEVWPTPGS</sequence>
<feature type="chain" id="PRO_0000333298" description="Bifunctional pantoate ligase/cytidylate kinase">
    <location>
        <begin position="1"/>
        <end position="488"/>
    </location>
</feature>
<feature type="region of interest" description="Pantoate--beta-alanine ligase">
    <location>
        <begin position="1"/>
        <end position="251"/>
    </location>
</feature>
<feature type="region of interest" description="Cytidylate kinase" evidence="1">
    <location>
        <begin position="252"/>
        <end position="488"/>
    </location>
</feature>
<feature type="active site" description="Proton donor" evidence="1">
    <location>
        <position position="8"/>
    </location>
</feature>
<feature type="binding site" evidence="1">
    <location>
        <begin position="1"/>
        <end position="8"/>
    </location>
    <ligand>
        <name>ATP</name>
        <dbReference type="ChEBI" id="CHEBI:30616"/>
    </ligand>
</feature>
<feature type="binding site" evidence="1">
    <location>
        <position position="36"/>
    </location>
    <ligand>
        <name>(R)-pantoate</name>
        <dbReference type="ChEBI" id="CHEBI:15980"/>
    </ligand>
</feature>
<feature type="binding site" evidence="1">
    <location>
        <position position="36"/>
    </location>
    <ligand>
        <name>beta-alanine</name>
        <dbReference type="ChEBI" id="CHEBI:57966"/>
    </ligand>
</feature>
<feature type="binding site" evidence="1">
    <location>
        <begin position="125"/>
        <end position="128"/>
    </location>
    <ligand>
        <name>ATP</name>
        <dbReference type="ChEBI" id="CHEBI:30616"/>
    </ligand>
</feature>
<feature type="binding site" evidence="1">
    <location>
        <position position="131"/>
    </location>
    <ligand>
        <name>(R)-pantoate</name>
        <dbReference type="ChEBI" id="CHEBI:15980"/>
    </ligand>
</feature>
<feature type="binding site" evidence="1">
    <location>
        <position position="154"/>
    </location>
    <ligand>
        <name>ATP</name>
        <dbReference type="ChEBI" id="CHEBI:30616"/>
    </ligand>
</feature>
<feature type="binding site" evidence="1">
    <location>
        <begin position="162"/>
        <end position="165"/>
    </location>
    <ligand>
        <name>ATP</name>
        <dbReference type="ChEBI" id="CHEBI:30616"/>
    </ligand>
</feature>
<comment type="function">
    <text evidence="1">Catalyzes the condensation of pantoate with beta-alanine in an ATP-dependent reaction via a pantoyl-adenylate intermediate.</text>
</comment>
<comment type="function">
    <text evidence="1">Catalyzes the transfer of a phosphate group from ATP to either CMP or dCMP to form CDP or dCDP and ADP, respectively.</text>
</comment>
<comment type="catalytic activity">
    <reaction evidence="1">
        <text>(R)-pantoate + beta-alanine + ATP = (R)-pantothenate + AMP + diphosphate + H(+)</text>
        <dbReference type="Rhea" id="RHEA:10912"/>
        <dbReference type="ChEBI" id="CHEBI:15378"/>
        <dbReference type="ChEBI" id="CHEBI:15980"/>
        <dbReference type="ChEBI" id="CHEBI:29032"/>
        <dbReference type="ChEBI" id="CHEBI:30616"/>
        <dbReference type="ChEBI" id="CHEBI:33019"/>
        <dbReference type="ChEBI" id="CHEBI:57966"/>
        <dbReference type="ChEBI" id="CHEBI:456215"/>
        <dbReference type="EC" id="6.3.2.1"/>
    </reaction>
</comment>
<comment type="catalytic activity">
    <reaction evidence="1">
        <text>CMP + ATP = CDP + ADP</text>
        <dbReference type="Rhea" id="RHEA:11600"/>
        <dbReference type="ChEBI" id="CHEBI:30616"/>
        <dbReference type="ChEBI" id="CHEBI:58069"/>
        <dbReference type="ChEBI" id="CHEBI:60377"/>
        <dbReference type="ChEBI" id="CHEBI:456216"/>
        <dbReference type="EC" id="2.7.4.25"/>
    </reaction>
</comment>
<comment type="catalytic activity">
    <reaction evidence="1">
        <text>dCMP + ATP = dCDP + ADP</text>
        <dbReference type="Rhea" id="RHEA:25094"/>
        <dbReference type="ChEBI" id="CHEBI:30616"/>
        <dbReference type="ChEBI" id="CHEBI:57566"/>
        <dbReference type="ChEBI" id="CHEBI:58593"/>
        <dbReference type="ChEBI" id="CHEBI:456216"/>
        <dbReference type="EC" id="2.7.4.25"/>
    </reaction>
</comment>
<comment type="pathway">
    <text evidence="1">Cofactor biosynthesis; (R)-pantothenate biosynthesis; (R)-pantothenate from (R)-pantoate and beta-alanine: step 1/1.</text>
</comment>
<comment type="subcellular location">
    <subcellularLocation>
        <location evidence="1">Cytoplasm</location>
    </subcellularLocation>
</comment>
<comment type="similarity">
    <text evidence="1">In the N-terminal section; belongs to the pantothenate synthetase family.</text>
</comment>
<comment type="similarity">
    <text evidence="1">In the C-terminal section; belongs to the cytidylate kinase family. Type 1 subfamily.</text>
</comment>
<gene>
    <name evidence="1" type="primary">panC/cmk</name>
    <name type="ordered locus">P9303_22471</name>
</gene>
<evidence type="ECO:0000255" key="1">
    <source>
        <dbReference type="HAMAP-Rule" id="MF_01349"/>
    </source>
</evidence>
<reference key="1">
    <citation type="journal article" date="2007" name="PLoS Genet.">
        <title>Patterns and implications of gene gain and loss in the evolution of Prochlorococcus.</title>
        <authorList>
            <person name="Kettler G.C."/>
            <person name="Martiny A.C."/>
            <person name="Huang K."/>
            <person name="Zucker J."/>
            <person name="Coleman M.L."/>
            <person name="Rodrigue S."/>
            <person name="Chen F."/>
            <person name="Lapidus A."/>
            <person name="Ferriera S."/>
            <person name="Johnson J."/>
            <person name="Steglich C."/>
            <person name="Church G.M."/>
            <person name="Richardson P."/>
            <person name="Chisholm S.W."/>
        </authorList>
    </citation>
    <scope>NUCLEOTIDE SEQUENCE [LARGE SCALE GENOMIC DNA]</scope>
    <source>
        <strain>MIT 9303</strain>
    </source>
</reference>
<keyword id="KW-0067">ATP-binding</keyword>
<keyword id="KW-0963">Cytoplasm</keyword>
<keyword id="KW-0418">Kinase</keyword>
<keyword id="KW-0436">Ligase</keyword>
<keyword id="KW-0511">Multifunctional enzyme</keyword>
<keyword id="KW-0547">Nucleotide-binding</keyword>
<keyword id="KW-0566">Pantothenate biosynthesis</keyword>
<keyword id="KW-0808">Transferase</keyword>